<keyword id="KW-1185">Reference proteome</keyword>
<organism>
    <name type="scientific">Lachancea thermotolerans (strain ATCC 56472 / CBS 6340 / NRRL Y-8284)</name>
    <name type="common">Yeast</name>
    <name type="synonym">Kluyveromyces thermotolerans</name>
    <dbReference type="NCBI Taxonomy" id="559295"/>
    <lineage>
        <taxon>Eukaryota</taxon>
        <taxon>Fungi</taxon>
        <taxon>Dikarya</taxon>
        <taxon>Ascomycota</taxon>
        <taxon>Saccharomycotina</taxon>
        <taxon>Saccharomycetes</taxon>
        <taxon>Saccharomycetales</taxon>
        <taxon>Saccharomycetaceae</taxon>
        <taxon>Lachancea</taxon>
    </lineage>
</organism>
<proteinExistence type="inferred from homology"/>
<comment type="function">
    <text evidence="1">Stationary phase-essential protein not required for growth on nonfermentable carbon sources.</text>
</comment>
<comment type="similarity">
    <text evidence="2">Belongs to the SPG4 family.</text>
</comment>
<evidence type="ECO:0000250" key="1"/>
<evidence type="ECO:0000305" key="2"/>
<name>SPG4_LACTC</name>
<accession>C5DGD8</accession>
<dbReference type="EMBL" id="CU928168">
    <property type="protein sequence ID" value="CAR22480.1"/>
    <property type="molecule type" value="Genomic_DNA"/>
</dbReference>
<dbReference type="RefSeq" id="XP_002552918.1">
    <property type="nucleotide sequence ID" value="XM_002552872.1"/>
</dbReference>
<dbReference type="SMR" id="C5DGD8"/>
<dbReference type="FunCoup" id="C5DGD8">
    <property type="interactions" value="45"/>
</dbReference>
<dbReference type="GeneID" id="8295761"/>
<dbReference type="KEGG" id="lth:KLTH0D04510g"/>
<dbReference type="eggNOG" id="ENOG502S7JY">
    <property type="taxonomic scope" value="Eukaryota"/>
</dbReference>
<dbReference type="HOGENOM" id="CLU_2158879_0_0_1"/>
<dbReference type="InParanoid" id="C5DGD8"/>
<dbReference type="OMA" id="AHEYREP"/>
<dbReference type="OrthoDB" id="4067991at2759"/>
<dbReference type="Proteomes" id="UP000002036">
    <property type="component" value="Chromosome D"/>
</dbReference>
<dbReference type="InterPro" id="IPR020485">
    <property type="entry name" value="Spg4"/>
</dbReference>
<dbReference type="Pfam" id="PF17325">
    <property type="entry name" value="SPG4"/>
    <property type="match status" value="1"/>
</dbReference>
<sequence length="111" mass="12311">MGGIFDAFEVYNKKKHSSNPHMFGNTSNTGGTKTDYVYSSEYRAPKKNKLMKDELLAPDSEHADGAKAMLTESAAQAGTPNMVDLSKLSQHELESLMKDLRKGEPNNRVNF</sequence>
<reference key="1">
    <citation type="journal article" date="2009" name="Genome Res.">
        <title>Comparative genomics of protoploid Saccharomycetaceae.</title>
        <authorList>
            <consortium name="The Genolevures Consortium"/>
            <person name="Souciet J.-L."/>
            <person name="Dujon B."/>
            <person name="Gaillardin C."/>
            <person name="Johnston M."/>
            <person name="Baret P.V."/>
            <person name="Cliften P."/>
            <person name="Sherman D.J."/>
            <person name="Weissenbach J."/>
            <person name="Westhof E."/>
            <person name="Wincker P."/>
            <person name="Jubin C."/>
            <person name="Poulain J."/>
            <person name="Barbe V."/>
            <person name="Segurens B."/>
            <person name="Artiguenave F."/>
            <person name="Anthouard V."/>
            <person name="Vacherie B."/>
            <person name="Val M.-E."/>
            <person name="Fulton R.S."/>
            <person name="Minx P."/>
            <person name="Wilson R."/>
            <person name="Durrens P."/>
            <person name="Jean G."/>
            <person name="Marck C."/>
            <person name="Martin T."/>
            <person name="Nikolski M."/>
            <person name="Rolland T."/>
            <person name="Seret M.-L."/>
            <person name="Casaregola S."/>
            <person name="Despons L."/>
            <person name="Fairhead C."/>
            <person name="Fischer G."/>
            <person name="Lafontaine I."/>
            <person name="Leh V."/>
            <person name="Lemaire M."/>
            <person name="de Montigny J."/>
            <person name="Neuveglise C."/>
            <person name="Thierry A."/>
            <person name="Blanc-Lenfle I."/>
            <person name="Bleykasten C."/>
            <person name="Diffels J."/>
            <person name="Fritsch E."/>
            <person name="Frangeul L."/>
            <person name="Goeffon A."/>
            <person name="Jauniaux N."/>
            <person name="Kachouri-Lafond R."/>
            <person name="Payen C."/>
            <person name="Potier S."/>
            <person name="Pribylova L."/>
            <person name="Ozanne C."/>
            <person name="Richard G.-F."/>
            <person name="Sacerdot C."/>
            <person name="Straub M.-L."/>
            <person name="Talla E."/>
        </authorList>
    </citation>
    <scope>NUCLEOTIDE SEQUENCE [LARGE SCALE GENOMIC DNA]</scope>
    <source>
        <strain>ATCC 56472 / CBS 6340 / NRRL Y-8284</strain>
    </source>
</reference>
<protein>
    <recommendedName>
        <fullName>Stationary phase protein 4</fullName>
    </recommendedName>
</protein>
<feature type="chain" id="PRO_0000405002" description="Stationary phase protein 4">
    <location>
        <begin position="1"/>
        <end position="111"/>
    </location>
</feature>
<gene>
    <name type="primary">SPG4</name>
    <name type="ordered locus">KLTH0D04510g</name>
</gene>